<proteinExistence type="inferred from homology"/>
<feature type="chain" id="PRO_0000277573" description="ATP synthase subunit b, chloroplastic">
    <location>
        <begin position="1"/>
        <end position="184"/>
    </location>
</feature>
<feature type="transmembrane region" description="Helical" evidence="1">
    <location>
        <begin position="27"/>
        <end position="49"/>
    </location>
</feature>
<feature type="sequence conflict" description="In Ref. 1; ABB90029." evidence="2" ref="1">
    <original>TD</original>
    <variation>PH</variation>
    <location>
        <begin position="5"/>
        <end position="6"/>
    </location>
</feature>
<feature type="sequence conflict" description="In Ref. 1; ABB90029." evidence="2" ref="1">
    <original>I</original>
    <variation>F</variation>
    <location>
        <position position="26"/>
    </location>
</feature>
<name>ATPF_SOLTU</name>
<dbReference type="EMBL" id="DQ231562">
    <property type="protein sequence ID" value="ABB90029.1"/>
    <property type="molecule type" value="Genomic_DNA"/>
</dbReference>
<dbReference type="EMBL" id="DQ386163">
    <property type="protein sequence ID" value="ABD47043.1"/>
    <property type="molecule type" value="Genomic_DNA"/>
</dbReference>
<dbReference type="RefSeq" id="YP_635625.1">
    <property type="nucleotide sequence ID" value="NC_008096.2"/>
</dbReference>
<dbReference type="SMR" id="Q27S64"/>
<dbReference type="FunCoup" id="Q27S64">
    <property type="interactions" value="269"/>
</dbReference>
<dbReference type="STRING" id="4113.Q27S64"/>
<dbReference type="GeneID" id="4099855"/>
<dbReference type="KEGG" id="sot:4099855"/>
<dbReference type="InParanoid" id="Q27S64"/>
<dbReference type="OrthoDB" id="1900203at2759"/>
<dbReference type="Proteomes" id="UP000011115">
    <property type="component" value="Unassembled WGS sequence"/>
</dbReference>
<dbReference type="GO" id="GO:0009535">
    <property type="term" value="C:chloroplast thylakoid membrane"/>
    <property type="evidence" value="ECO:0007669"/>
    <property type="project" value="UniProtKB-SubCell"/>
</dbReference>
<dbReference type="GO" id="GO:0045259">
    <property type="term" value="C:proton-transporting ATP synthase complex"/>
    <property type="evidence" value="ECO:0007669"/>
    <property type="project" value="UniProtKB-KW"/>
</dbReference>
<dbReference type="GO" id="GO:0005524">
    <property type="term" value="F:ATP binding"/>
    <property type="evidence" value="ECO:0007669"/>
    <property type="project" value="UniProtKB-KW"/>
</dbReference>
<dbReference type="GO" id="GO:0046933">
    <property type="term" value="F:proton-transporting ATP synthase activity, rotational mechanism"/>
    <property type="evidence" value="ECO:0007669"/>
    <property type="project" value="UniProtKB-UniRule"/>
</dbReference>
<dbReference type="CDD" id="cd06503">
    <property type="entry name" value="ATP-synt_Fo_b"/>
    <property type="match status" value="1"/>
</dbReference>
<dbReference type="HAMAP" id="MF_01398">
    <property type="entry name" value="ATP_synth_b_bprime"/>
    <property type="match status" value="1"/>
</dbReference>
<dbReference type="InterPro" id="IPR002146">
    <property type="entry name" value="ATP_synth_b/b'su_bac/chlpt"/>
</dbReference>
<dbReference type="PANTHER" id="PTHR34264">
    <property type="entry name" value="ATP SYNTHASE SUBUNIT B, CHLOROPLASTIC"/>
    <property type="match status" value="1"/>
</dbReference>
<dbReference type="PANTHER" id="PTHR34264:SF3">
    <property type="entry name" value="ATP SYNTHASE SUBUNIT B, CHLOROPLASTIC"/>
    <property type="match status" value="1"/>
</dbReference>
<dbReference type="Pfam" id="PF00430">
    <property type="entry name" value="ATP-synt_B"/>
    <property type="match status" value="1"/>
</dbReference>
<protein>
    <recommendedName>
        <fullName evidence="1">ATP synthase subunit b, chloroplastic</fullName>
    </recommendedName>
    <alternativeName>
        <fullName evidence="1">ATP synthase F(0) sector subunit b</fullName>
    </alternativeName>
    <alternativeName>
        <fullName evidence="1">ATPase subunit I</fullName>
    </alternativeName>
</protein>
<gene>
    <name evidence="1" type="primary">atpF</name>
</gene>
<keyword id="KW-0066">ATP synthesis</keyword>
<keyword id="KW-0067">ATP-binding</keyword>
<keyword id="KW-0138">CF(0)</keyword>
<keyword id="KW-0150">Chloroplast</keyword>
<keyword id="KW-0375">Hydrogen ion transport</keyword>
<keyword id="KW-0406">Ion transport</keyword>
<keyword id="KW-0472">Membrane</keyword>
<keyword id="KW-0547">Nucleotide-binding</keyword>
<keyword id="KW-0934">Plastid</keyword>
<keyword id="KW-1185">Reference proteome</keyword>
<keyword id="KW-0793">Thylakoid</keyword>
<keyword id="KW-0812">Transmembrane</keyword>
<keyword id="KW-1133">Transmembrane helix</keyword>
<keyword id="KW-0813">Transport</keyword>
<evidence type="ECO:0000255" key="1">
    <source>
        <dbReference type="HAMAP-Rule" id="MF_01398"/>
    </source>
</evidence>
<evidence type="ECO:0000305" key="2"/>
<comment type="function">
    <text evidence="1">F(1)F(0) ATP synthase produces ATP from ADP in the presence of a proton or sodium gradient. F-type ATPases consist of two structural domains, F(1) containing the extramembraneous catalytic core and F(0) containing the membrane proton channel, linked together by a central stalk and a peripheral stalk. During catalysis, ATP synthesis in the catalytic domain of F(1) is coupled via a rotary mechanism of the central stalk subunits to proton translocation.</text>
</comment>
<comment type="function">
    <text evidence="1">Component of the F(0) channel, it forms part of the peripheral stalk, linking F(1) to F(0).</text>
</comment>
<comment type="subunit">
    <text evidence="1">F-type ATPases have 2 components, F(1) - the catalytic core - and F(0) - the membrane proton channel. F(1) has five subunits: alpha(3), beta(3), gamma(1), delta(1), epsilon(1). F(0) has four main subunits: a(1), b(1), b'(1) and c(10-14). The alpha and beta chains form an alternating ring which encloses part of the gamma chain. F(1) is attached to F(0) by a central stalk formed by the gamma and epsilon chains, while a peripheral stalk is formed by the delta, b and b' chains.</text>
</comment>
<comment type="subcellular location">
    <subcellularLocation>
        <location evidence="1">Plastid</location>
        <location evidence="1">Chloroplast thylakoid membrane</location>
        <topology evidence="1">Single-pass membrane protein</topology>
    </subcellularLocation>
</comment>
<comment type="miscellaneous">
    <text>In plastids the F-type ATPase is also known as CF(1)CF(0).</text>
</comment>
<comment type="similarity">
    <text evidence="1">Belongs to the ATPase B chain family.</text>
</comment>
<reference key="1">
    <citation type="journal article" date="2006" name="Plant Cell Rep.">
        <title>The complete chloroplast genome sequences of Solanum tuberosum and comparative analysis with Solanaceae species identified the presence of a 241-bp deletion in cultivated potato chloroplast DNA sequence.</title>
        <authorList>
            <person name="Chung H.-J."/>
            <person name="Jung J.D."/>
            <person name="Park H.-W."/>
            <person name="Kim J.-H."/>
            <person name="Cha H.W."/>
            <person name="Min S.R."/>
            <person name="Jeong W.-J."/>
            <person name="Liu J.R."/>
        </authorList>
    </citation>
    <scope>NUCLEOTIDE SEQUENCE [LARGE SCALE GENOMIC DNA]</scope>
    <source>
        <strain>cv. Desiree</strain>
    </source>
</reference>
<reference key="2">
    <citation type="submission" date="2006-02" db="EMBL/GenBank/DDBJ databases">
        <title>Complete chloroplast genome sequences of Solanum tuberosum cultivar Desiree and comparative analyses with other Solanaceae genomes.</title>
        <authorList>
            <person name="Gargano D."/>
            <person name="Scotti N."/>
            <person name="Vezzi A."/>
            <person name="Bilardi A."/>
            <person name="Valle G."/>
            <person name="Grillo S."/>
            <person name="Cardi T."/>
        </authorList>
    </citation>
    <scope>NUCLEOTIDE SEQUENCE [LARGE SCALE GENOMIC DNA]</scope>
    <source>
        <strain>cv. Desiree</strain>
    </source>
</reference>
<geneLocation type="chloroplast"/>
<sequence>MKNVTDSFVSLGHWPSAGSFGFNTDILATNPINLSVVLGVLIFFGKGVLSDLLDNRKQRILNTIRNSEELRGGAIEQLEKARSRLRKVETEAEQFRVNGYSEIEREKLNLINSTYKTLEQLENYKNETIQFEQQRAINQVRQRVFQQALRGALGTLNSCLNNELHLRTISANIGMLGTMKEITD</sequence>
<organism>
    <name type="scientific">Solanum tuberosum</name>
    <name type="common">Potato</name>
    <dbReference type="NCBI Taxonomy" id="4113"/>
    <lineage>
        <taxon>Eukaryota</taxon>
        <taxon>Viridiplantae</taxon>
        <taxon>Streptophyta</taxon>
        <taxon>Embryophyta</taxon>
        <taxon>Tracheophyta</taxon>
        <taxon>Spermatophyta</taxon>
        <taxon>Magnoliopsida</taxon>
        <taxon>eudicotyledons</taxon>
        <taxon>Gunneridae</taxon>
        <taxon>Pentapetalae</taxon>
        <taxon>asterids</taxon>
        <taxon>lamiids</taxon>
        <taxon>Solanales</taxon>
        <taxon>Solanaceae</taxon>
        <taxon>Solanoideae</taxon>
        <taxon>Solaneae</taxon>
        <taxon>Solanum</taxon>
    </lineage>
</organism>
<accession>Q27S64</accession>
<accession>Q2VEJ0</accession>